<feature type="signal peptide" evidence="1">
    <location>
        <begin position="1"/>
        <end position="26"/>
    </location>
</feature>
<feature type="chain" id="PRO_0000414048" description="Multidrug resistance protein MdtA">
    <location>
        <begin position="27"/>
        <end position="411"/>
    </location>
</feature>
<feature type="region of interest" description="Disordered" evidence="2">
    <location>
        <begin position="35"/>
        <end position="64"/>
    </location>
</feature>
<feature type="compositionally biased region" description="Polar residues" evidence="2">
    <location>
        <begin position="35"/>
        <end position="55"/>
    </location>
</feature>
<organism>
    <name type="scientific">Proteus mirabilis (strain HI4320)</name>
    <dbReference type="NCBI Taxonomy" id="529507"/>
    <lineage>
        <taxon>Bacteria</taxon>
        <taxon>Pseudomonadati</taxon>
        <taxon>Pseudomonadota</taxon>
        <taxon>Gammaproteobacteria</taxon>
        <taxon>Enterobacterales</taxon>
        <taxon>Morganellaceae</taxon>
        <taxon>Proteus</taxon>
    </lineage>
</organism>
<reference key="1">
    <citation type="journal article" date="2008" name="J. Bacteriol.">
        <title>Complete genome sequence of uropathogenic Proteus mirabilis, a master of both adherence and motility.</title>
        <authorList>
            <person name="Pearson M.M."/>
            <person name="Sebaihia M."/>
            <person name="Churcher C."/>
            <person name="Quail M.A."/>
            <person name="Seshasayee A.S."/>
            <person name="Luscombe N.M."/>
            <person name="Abdellah Z."/>
            <person name="Arrosmith C."/>
            <person name="Atkin B."/>
            <person name="Chillingworth T."/>
            <person name="Hauser H."/>
            <person name="Jagels K."/>
            <person name="Moule S."/>
            <person name="Mungall K."/>
            <person name="Norbertczak H."/>
            <person name="Rabbinowitsch E."/>
            <person name="Walker D."/>
            <person name="Whithead S."/>
            <person name="Thomson N.R."/>
            <person name="Rather P.N."/>
            <person name="Parkhill J."/>
            <person name="Mobley H.L.T."/>
        </authorList>
    </citation>
    <scope>NUCLEOTIDE SEQUENCE [LARGE SCALE GENOMIC DNA]</scope>
    <source>
        <strain>HI4320</strain>
    </source>
</reference>
<evidence type="ECO:0000255" key="1">
    <source>
        <dbReference type="HAMAP-Rule" id="MF_01422"/>
    </source>
</evidence>
<evidence type="ECO:0000256" key="2">
    <source>
        <dbReference type="SAM" id="MobiDB-lite"/>
    </source>
</evidence>
<keyword id="KW-0997">Cell inner membrane</keyword>
<keyword id="KW-1003">Cell membrane</keyword>
<keyword id="KW-0472">Membrane</keyword>
<keyword id="KW-1185">Reference proteome</keyword>
<keyword id="KW-0732">Signal</keyword>
<keyword id="KW-0813">Transport</keyword>
<gene>
    <name evidence="1" type="primary">mdtA</name>
    <name type="ordered locus">PMI1585</name>
</gene>
<dbReference type="EMBL" id="AM942759">
    <property type="protein sequence ID" value="CAR43317.1"/>
    <property type="molecule type" value="Genomic_DNA"/>
</dbReference>
<dbReference type="RefSeq" id="WP_012368040.1">
    <property type="nucleotide sequence ID" value="NC_010554.1"/>
</dbReference>
<dbReference type="SMR" id="B4EY99"/>
<dbReference type="EnsemblBacteria" id="CAR43317">
    <property type="protein sequence ID" value="CAR43317"/>
    <property type="gene ID" value="PMI1585"/>
</dbReference>
<dbReference type="GeneID" id="6801611"/>
<dbReference type="KEGG" id="pmr:PMI1585"/>
<dbReference type="eggNOG" id="COG0845">
    <property type="taxonomic scope" value="Bacteria"/>
</dbReference>
<dbReference type="HOGENOM" id="CLU_018816_2_0_6"/>
<dbReference type="Proteomes" id="UP000008319">
    <property type="component" value="Chromosome"/>
</dbReference>
<dbReference type="GO" id="GO:1990281">
    <property type="term" value="C:efflux pump complex"/>
    <property type="evidence" value="ECO:0007669"/>
    <property type="project" value="TreeGrafter"/>
</dbReference>
<dbReference type="GO" id="GO:0005886">
    <property type="term" value="C:plasma membrane"/>
    <property type="evidence" value="ECO:0007669"/>
    <property type="project" value="UniProtKB-SubCell"/>
</dbReference>
<dbReference type="GO" id="GO:0015562">
    <property type="term" value="F:efflux transmembrane transporter activity"/>
    <property type="evidence" value="ECO:0007669"/>
    <property type="project" value="TreeGrafter"/>
</dbReference>
<dbReference type="FunFam" id="2.40.420.20:FF:000001">
    <property type="entry name" value="Efflux RND transporter periplasmic adaptor subunit"/>
    <property type="match status" value="1"/>
</dbReference>
<dbReference type="Gene3D" id="2.40.30.170">
    <property type="match status" value="1"/>
</dbReference>
<dbReference type="Gene3D" id="2.40.420.20">
    <property type="match status" value="1"/>
</dbReference>
<dbReference type="Gene3D" id="2.40.50.100">
    <property type="match status" value="1"/>
</dbReference>
<dbReference type="Gene3D" id="1.10.287.470">
    <property type="entry name" value="Helix hairpin bin"/>
    <property type="match status" value="1"/>
</dbReference>
<dbReference type="HAMAP" id="MF_01422">
    <property type="entry name" value="MdtA"/>
    <property type="match status" value="1"/>
</dbReference>
<dbReference type="InterPro" id="IPR032317">
    <property type="entry name" value="CusB_D23"/>
</dbReference>
<dbReference type="InterPro" id="IPR022824">
    <property type="entry name" value="Multidrug-R_MdtA"/>
</dbReference>
<dbReference type="InterPro" id="IPR006143">
    <property type="entry name" value="RND_pump_MFP"/>
</dbReference>
<dbReference type="NCBIfam" id="NF008589">
    <property type="entry name" value="PRK11556.1"/>
    <property type="match status" value="1"/>
</dbReference>
<dbReference type="NCBIfam" id="TIGR01730">
    <property type="entry name" value="RND_mfp"/>
    <property type="match status" value="1"/>
</dbReference>
<dbReference type="PANTHER" id="PTHR30469">
    <property type="entry name" value="MULTIDRUG RESISTANCE PROTEIN MDTA"/>
    <property type="match status" value="1"/>
</dbReference>
<dbReference type="PANTHER" id="PTHR30469:SF12">
    <property type="entry name" value="MULTIDRUG RESISTANCE PROTEIN MDTA"/>
    <property type="match status" value="1"/>
</dbReference>
<dbReference type="Pfam" id="PF16576">
    <property type="entry name" value="HlyD_D23"/>
    <property type="match status" value="1"/>
</dbReference>
<dbReference type="SUPFAM" id="SSF111369">
    <property type="entry name" value="HlyD-like secretion proteins"/>
    <property type="match status" value="1"/>
</dbReference>
<name>MDTA_PROMH</name>
<accession>B4EY99</accession>
<proteinExistence type="inferred from homology"/>
<comment type="subunit">
    <text evidence="1">Part of a tripartite efflux system composed of MdtA, MdtB and MdtC.</text>
</comment>
<comment type="subcellular location">
    <subcellularLocation>
        <location evidence="1">Cell inner membrane</location>
        <topology evidence="1">Peripheral membrane protein</topology>
    </subcellularLocation>
</comment>
<comment type="similarity">
    <text evidence="1">Belongs to the membrane fusion protein (MFP) (TC 8.A.1) family.</text>
</comment>
<protein>
    <recommendedName>
        <fullName evidence="1">Multidrug resistance protein MdtA</fullName>
    </recommendedName>
    <alternativeName>
        <fullName evidence="1">Multidrug transporter MdtA</fullName>
    </alternativeName>
</protein>
<sequence>MNNNKKTKKRFSLIIILLIVIAGAIAYWQYSSNNSAPPVSKDTPTANTPNRSTAGSRRPPMPPVQVATSAQEDVPQFLTALGTVKAVNSVTVTSRVEGQLMALHFTEGQQVNQGDLLAEIDPRPFEVQLAQAKGQLAKDQATLANARLDLARYQKLAKTHLVSQQELDNQAALVKQSEASISIDKAAINNAQLQLTYSKITAPISGRVGLKQVDVGNYISGGSSTPIVVINQMDPVDVLFTLPEQDLSQVILARKNNPTLPVIALDRNNKIELAQGALFSVDNQIDATTGTIKLKARFPQQESTLFPNQFVNIRLYVTTLEKAVVIPNAALQMGNEGHFVWVVDEENKVSKLAVEVASQNADKVVIASGLSANQRVVTDGVDRLTQGAKVEIVTPLAPKAKTTDPVVAEKA</sequence>